<dbReference type="EMBL" id="CP000921">
    <property type="protein sequence ID" value="ACO22871.1"/>
    <property type="molecule type" value="Genomic_DNA"/>
</dbReference>
<dbReference type="RefSeq" id="WP_000766087.1">
    <property type="nucleotide sequence ID" value="NC_012469.1"/>
</dbReference>
<dbReference type="SMR" id="C1CPA7"/>
<dbReference type="GeneID" id="45652290"/>
<dbReference type="KEGG" id="snt:SPT_0275"/>
<dbReference type="HOGENOM" id="CLU_055188_4_2_9"/>
<dbReference type="GO" id="GO:0022625">
    <property type="term" value="C:cytosolic large ribosomal subunit"/>
    <property type="evidence" value="ECO:0007669"/>
    <property type="project" value="TreeGrafter"/>
</dbReference>
<dbReference type="GO" id="GO:0019843">
    <property type="term" value="F:rRNA binding"/>
    <property type="evidence" value="ECO:0007669"/>
    <property type="project" value="UniProtKB-UniRule"/>
</dbReference>
<dbReference type="GO" id="GO:0003735">
    <property type="term" value="F:structural constituent of ribosome"/>
    <property type="evidence" value="ECO:0007669"/>
    <property type="project" value="InterPro"/>
</dbReference>
<dbReference type="GO" id="GO:0006412">
    <property type="term" value="P:translation"/>
    <property type="evidence" value="ECO:0007669"/>
    <property type="project" value="UniProtKB-UniRule"/>
</dbReference>
<dbReference type="FunFam" id="3.100.10.10:FF:000004">
    <property type="entry name" value="50S ribosomal protein L15"/>
    <property type="match status" value="1"/>
</dbReference>
<dbReference type="Gene3D" id="3.100.10.10">
    <property type="match status" value="1"/>
</dbReference>
<dbReference type="HAMAP" id="MF_01341">
    <property type="entry name" value="Ribosomal_uL15"/>
    <property type="match status" value="1"/>
</dbReference>
<dbReference type="InterPro" id="IPR030878">
    <property type="entry name" value="Ribosomal_uL15"/>
</dbReference>
<dbReference type="InterPro" id="IPR021131">
    <property type="entry name" value="Ribosomal_uL15/eL18"/>
</dbReference>
<dbReference type="InterPro" id="IPR036227">
    <property type="entry name" value="Ribosomal_uL15/eL18_sf"/>
</dbReference>
<dbReference type="InterPro" id="IPR005749">
    <property type="entry name" value="Ribosomal_uL15_bac-type"/>
</dbReference>
<dbReference type="InterPro" id="IPR001196">
    <property type="entry name" value="Ribosomal_uL15_CS"/>
</dbReference>
<dbReference type="NCBIfam" id="TIGR01071">
    <property type="entry name" value="rplO_bact"/>
    <property type="match status" value="1"/>
</dbReference>
<dbReference type="PANTHER" id="PTHR12934">
    <property type="entry name" value="50S RIBOSOMAL PROTEIN L15"/>
    <property type="match status" value="1"/>
</dbReference>
<dbReference type="PANTHER" id="PTHR12934:SF11">
    <property type="entry name" value="LARGE RIBOSOMAL SUBUNIT PROTEIN UL15M"/>
    <property type="match status" value="1"/>
</dbReference>
<dbReference type="Pfam" id="PF00828">
    <property type="entry name" value="Ribosomal_L27A"/>
    <property type="match status" value="1"/>
</dbReference>
<dbReference type="SUPFAM" id="SSF52080">
    <property type="entry name" value="Ribosomal proteins L15p and L18e"/>
    <property type="match status" value="1"/>
</dbReference>
<dbReference type="PROSITE" id="PS00475">
    <property type="entry name" value="RIBOSOMAL_L15"/>
    <property type="match status" value="1"/>
</dbReference>
<gene>
    <name evidence="1" type="primary">rplO</name>
    <name type="ordered locus">SPT_0275</name>
</gene>
<accession>C1CPA7</accession>
<comment type="function">
    <text evidence="1">Binds to the 23S rRNA.</text>
</comment>
<comment type="subunit">
    <text evidence="1">Part of the 50S ribosomal subunit.</text>
</comment>
<comment type="similarity">
    <text evidence="1">Belongs to the universal ribosomal protein uL15 family.</text>
</comment>
<feature type="chain" id="PRO_1000166320" description="Large ribosomal subunit protein uL15">
    <location>
        <begin position="1"/>
        <end position="146"/>
    </location>
</feature>
<feature type="region of interest" description="Disordered" evidence="2">
    <location>
        <begin position="1"/>
        <end position="51"/>
    </location>
</feature>
<feature type="compositionally biased region" description="Basic and acidic residues" evidence="2">
    <location>
        <begin position="1"/>
        <end position="13"/>
    </location>
</feature>
<feature type="compositionally biased region" description="Gly residues" evidence="2">
    <location>
        <begin position="23"/>
        <end position="35"/>
    </location>
</feature>
<feature type="compositionally biased region" description="Gly residues" evidence="2">
    <location>
        <begin position="42"/>
        <end position="51"/>
    </location>
</feature>
<keyword id="KW-0687">Ribonucleoprotein</keyword>
<keyword id="KW-0689">Ribosomal protein</keyword>
<keyword id="KW-0694">RNA-binding</keyword>
<keyword id="KW-0699">rRNA-binding</keyword>
<protein>
    <recommendedName>
        <fullName evidence="1">Large ribosomal subunit protein uL15</fullName>
    </recommendedName>
    <alternativeName>
        <fullName evidence="3">50S ribosomal protein L15</fullName>
    </alternativeName>
</protein>
<reference key="1">
    <citation type="journal article" date="2010" name="Genome Biol.">
        <title>Structure and dynamics of the pan-genome of Streptococcus pneumoniae and closely related species.</title>
        <authorList>
            <person name="Donati C."/>
            <person name="Hiller N.L."/>
            <person name="Tettelin H."/>
            <person name="Muzzi A."/>
            <person name="Croucher N.J."/>
            <person name="Angiuoli S.V."/>
            <person name="Oggioni M."/>
            <person name="Dunning Hotopp J.C."/>
            <person name="Hu F.Z."/>
            <person name="Riley D.R."/>
            <person name="Covacci A."/>
            <person name="Mitchell T.J."/>
            <person name="Bentley S.D."/>
            <person name="Kilian M."/>
            <person name="Ehrlich G.D."/>
            <person name="Rappuoli R."/>
            <person name="Moxon E.R."/>
            <person name="Masignani V."/>
        </authorList>
    </citation>
    <scope>NUCLEOTIDE SEQUENCE [LARGE SCALE GENOMIC DNA]</scope>
    <source>
        <strain>Taiwan19F-14</strain>
    </source>
</reference>
<name>RL15_STRZT</name>
<organism>
    <name type="scientific">Streptococcus pneumoniae (strain Taiwan19F-14)</name>
    <dbReference type="NCBI Taxonomy" id="487213"/>
    <lineage>
        <taxon>Bacteria</taxon>
        <taxon>Bacillati</taxon>
        <taxon>Bacillota</taxon>
        <taxon>Bacilli</taxon>
        <taxon>Lactobacillales</taxon>
        <taxon>Streptococcaceae</taxon>
        <taxon>Streptococcus</taxon>
    </lineage>
</organism>
<proteinExistence type="inferred from homology"/>
<sequence>MKLHELKPAEGSRKVRNRVGRGTSSGNGKTSGRGQKGQKARSGGGVRLGFEGGQTPLFRRLPKRGFTNINAKEYAIVNLDQLNVFEDGAEVTPVVLIEAGIVKAEKSGIKILGNGELTKKLTVKAAKFSKSAEEAITAKGGSVEVI</sequence>
<evidence type="ECO:0000255" key="1">
    <source>
        <dbReference type="HAMAP-Rule" id="MF_01341"/>
    </source>
</evidence>
<evidence type="ECO:0000256" key="2">
    <source>
        <dbReference type="SAM" id="MobiDB-lite"/>
    </source>
</evidence>
<evidence type="ECO:0000305" key="3"/>